<gene>
    <name evidence="1" type="primary">truB</name>
    <name type="ordered locus">MM_2154</name>
</gene>
<sequence length="338" mass="36775">MSSAGKLPSEVERTLVRKSGAWTNPAYGCPPEKRPIHEYIEKGVVNIDKPRGPTSHEVAAWVKAILGVHTAGHAGSLDPKVTGLLPTLLGKATLAVPALRLSGKEYICHLKLHRAMPQKLVRQVCEEFTGPIYQMPPIKSAVKRVIRVRTIYHLEVLEIEGTSVLFRVGCEAGTYIRKLCHDIGLALGCGGHMQGLRRTKAGPFTEKTLITLHELKDAYVFWKEDGDESELRRVIRPMESAVSHLPKIILRDSAVDAICSGASLAVPGITGLDSNLAEGELTGLFTLKGELVALAKAKMTTEEILKASAGIAASPIRVLMEAGTYPRGWTKKEEKVQL</sequence>
<dbReference type="EC" id="5.4.99.25" evidence="1"/>
<dbReference type="EMBL" id="AE008384">
    <property type="protein sequence ID" value="AAM31850.1"/>
    <property type="molecule type" value="Genomic_DNA"/>
</dbReference>
<dbReference type="RefSeq" id="WP_011034085.1">
    <property type="nucleotide sequence ID" value="NC_003901.1"/>
</dbReference>
<dbReference type="SMR" id="Q8PV20"/>
<dbReference type="GeneID" id="1480496"/>
<dbReference type="KEGG" id="mma:MM_2154"/>
<dbReference type="PATRIC" id="fig|192952.21.peg.2470"/>
<dbReference type="eggNOG" id="arCOG00987">
    <property type="taxonomic scope" value="Archaea"/>
</dbReference>
<dbReference type="HOGENOM" id="CLU_032087_3_0_2"/>
<dbReference type="Proteomes" id="UP000000595">
    <property type="component" value="Chromosome"/>
</dbReference>
<dbReference type="GO" id="GO:0003723">
    <property type="term" value="F:RNA binding"/>
    <property type="evidence" value="ECO:0007669"/>
    <property type="project" value="InterPro"/>
</dbReference>
<dbReference type="GO" id="GO:0160148">
    <property type="term" value="F:tRNA pseudouridine(55) synthase activity"/>
    <property type="evidence" value="ECO:0007669"/>
    <property type="project" value="UniProtKB-EC"/>
</dbReference>
<dbReference type="GO" id="GO:0000495">
    <property type="term" value="P:box H/ACA sno(s)RNA 3'-end processing"/>
    <property type="evidence" value="ECO:0007669"/>
    <property type="project" value="TreeGrafter"/>
</dbReference>
<dbReference type="GO" id="GO:1990481">
    <property type="term" value="P:mRNA pseudouridine synthesis"/>
    <property type="evidence" value="ECO:0007669"/>
    <property type="project" value="TreeGrafter"/>
</dbReference>
<dbReference type="GO" id="GO:0031118">
    <property type="term" value="P:rRNA pseudouridine synthesis"/>
    <property type="evidence" value="ECO:0007669"/>
    <property type="project" value="TreeGrafter"/>
</dbReference>
<dbReference type="GO" id="GO:0031120">
    <property type="term" value="P:snRNA pseudouridine synthesis"/>
    <property type="evidence" value="ECO:0007669"/>
    <property type="project" value="TreeGrafter"/>
</dbReference>
<dbReference type="GO" id="GO:0031119">
    <property type="term" value="P:tRNA pseudouridine synthesis"/>
    <property type="evidence" value="ECO:0007669"/>
    <property type="project" value="UniProtKB-UniRule"/>
</dbReference>
<dbReference type="CDD" id="cd02572">
    <property type="entry name" value="PseudoU_synth_hDyskerin"/>
    <property type="match status" value="1"/>
</dbReference>
<dbReference type="CDD" id="cd21148">
    <property type="entry name" value="PUA_Cbf5"/>
    <property type="match status" value="1"/>
</dbReference>
<dbReference type="FunFam" id="3.30.2350.10:FF:000001">
    <property type="entry name" value="H/ACA ribonucleoprotein complex subunit CBF5"/>
    <property type="match status" value="1"/>
</dbReference>
<dbReference type="Gene3D" id="3.30.2350.10">
    <property type="entry name" value="Pseudouridine synthase"/>
    <property type="match status" value="1"/>
</dbReference>
<dbReference type="Gene3D" id="2.30.130.10">
    <property type="entry name" value="PUA domain"/>
    <property type="match status" value="1"/>
</dbReference>
<dbReference type="HAMAP" id="MF_01081">
    <property type="entry name" value="TruB_arch"/>
    <property type="match status" value="1"/>
</dbReference>
<dbReference type="InterPro" id="IPR012960">
    <property type="entry name" value="Dyskerin-like"/>
</dbReference>
<dbReference type="InterPro" id="IPR020103">
    <property type="entry name" value="PsdUridine_synth_cat_dom_sf"/>
</dbReference>
<dbReference type="InterPro" id="IPR002501">
    <property type="entry name" value="PsdUridine_synth_N"/>
</dbReference>
<dbReference type="InterPro" id="IPR002478">
    <property type="entry name" value="PUA"/>
</dbReference>
<dbReference type="InterPro" id="IPR015947">
    <property type="entry name" value="PUA-like_sf"/>
</dbReference>
<dbReference type="InterPro" id="IPR036974">
    <property type="entry name" value="PUA_sf"/>
</dbReference>
<dbReference type="InterPro" id="IPR004802">
    <property type="entry name" value="tRNA_PsdUridine_synth_B_fam"/>
</dbReference>
<dbReference type="InterPro" id="IPR026326">
    <property type="entry name" value="TruB_arch"/>
</dbReference>
<dbReference type="InterPro" id="IPR032819">
    <property type="entry name" value="TruB_C"/>
</dbReference>
<dbReference type="NCBIfam" id="TIGR00425">
    <property type="entry name" value="CBF5"/>
    <property type="match status" value="1"/>
</dbReference>
<dbReference type="NCBIfam" id="NF003280">
    <property type="entry name" value="PRK04270.1"/>
    <property type="match status" value="1"/>
</dbReference>
<dbReference type="PANTHER" id="PTHR23127">
    <property type="entry name" value="CENTROMERE/MICROTUBULE BINDING PROTEIN CBF5"/>
    <property type="match status" value="1"/>
</dbReference>
<dbReference type="PANTHER" id="PTHR23127:SF0">
    <property type="entry name" value="H_ACA RIBONUCLEOPROTEIN COMPLEX SUBUNIT DKC1"/>
    <property type="match status" value="1"/>
</dbReference>
<dbReference type="Pfam" id="PF08068">
    <property type="entry name" value="DKCLD"/>
    <property type="match status" value="1"/>
</dbReference>
<dbReference type="Pfam" id="PF01472">
    <property type="entry name" value="PUA"/>
    <property type="match status" value="1"/>
</dbReference>
<dbReference type="Pfam" id="PF16198">
    <property type="entry name" value="TruB_C_2"/>
    <property type="match status" value="1"/>
</dbReference>
<dbReference type="Pfam" id="PF01509">
    <property type="entry name" value="TruB_N"/>
    <property type="match status" value="1"/>
</dbReference>
<dbReference type="SMART" id="SM01136">
    <property type="entry name" value="DKCLD"/>
    <property type="match status" value="1"/>
</dbReference>
<dbReference type="SMART" id="SM00359">
    <property type="entry name" value="PUA"/>
    <property type="match status" value="1"/>
</dbReference>
<dbReference type="SUPFAM" id="SSF55120">
    <property type="entry name" value="Pseudouridine synthase"/>
    <property type="match status" value="1"/>
</dbReference>
<dbReference type="SUPFAM" id="SSF88697">
    <property type="entry name" value="PUA domain-like"/>
    <property type="match status" value="1"/>
</dbReference>
<dbReference type="PROSITE" id="PS50890">
    <property type="entry name" value="PUA"/>
    <property type="match status" value="1"/>
</dbReference>
<feature type="chain" id="PRO_0000121961" description="Probable tRNA pseudouridine synthase B">
    <location>
        <begin position="1"/>
        <end position="338"/>
    </location>
</feature>
<feature type="domain" description="PUA" evidence="1">
    <location>
        <begin position="245"/>
        <end position="320"/>
    </location>
</feature>
<feature type="active site" description="Nucleophile" evidence="1">
    <location>
        <position position="78"/>
    </location>
</feature>
<protein>
    <recommendedName>
        <fullName evidence="1">Probable tRNA pseudouridine synthase B</fullName>
        <ecNumber evidence="1">5.4.99.25</ecNumber>
    </recommendedName>
    <alternativeName>
        <fullName evidence="1">tRNA pseudouridine(55) synthase</fullName>
        <shortName evidence="1">Psi55 synthase</shortName>
    </alternativeName>
    <alternativeName>
        <fullName evidence="1">tRNA pseudouridylate synthase</fullName>
    </alternativeName>
    <alternativeName>
        <fullName evidence="1">tRNA-uridine isomerase</fullName>
    </alternativeName>
</protein>
<name>TRUB_METMA</name>
<accession>Q8PV20</accession>
<proteinExistence type="inferred from homology"/>
<reference key="1">
    <citation type="journal article" date="2002" name="J. Mol. Microbiol. Biotechnol.">
        <title>The genome of Methanosarcina mazei: evidence for lateral gene transfer between Bacteria and Archaea.</title>
        <authorList>
            <person name="Deppenmeier U."/>
            <person name="Johann A."/>
            <person name="Hartsch T."/>
            <person name="Merkl R."/>
            <person name="Schmitz R.A."/>
            <person name="Martinez-Arias R."/>
            <person name="Henne A."/>
            <person name="Wiezer A."/>
            <person name="Baeumer S."/>
            <person name="Jacobi C."/>
            <person name="Brueggemann H."/>
            <person name="Lienard T."/>
            <person name="Christmann A."/>
            <person name="Boemecke M."/>
            <person name="Steckel S."/>
            <person name="Bhattacharyya A."/>
            <person name="Lykidis A."/>
            <person name="Overbeek R."/>
            <person name="Klenk H.-P."/>
            <person name="Gunsalus R.P."/>
            <person name="Fritz H.-J."/>
            <person name="Gottschalk G."/>
        </authorList>
    </citation>
    <scope>NUCLEOTIDE SEQUENCE [LARGE SCALE GENOMIC DNA]</scope>
    <source>
        <strain>ATCC BAA-159 / DSM 3647 / Goe1 / Go1 / JCM 11833 / OCM 88</strain>
    </source>
</reference>
<keyword id="KW-0413">Isomerase</keyword>
<keyword id="KW-0819">tRNA processing</keyword>
<evidence type="ECO:0000255" key="1">
    <source>
        <dbReference type="HAMAP-Rule" id="MF_01081"/>
    </source>
</evidence>
<comment type="function">
    <text evidence="1">Could be responsible for synthesis of pseudouridine from uracil-55 in the psi GC loop of transfer RNAs.</text>
</comment>
<comment type="catalytic activity">
    <reaction evidence="1">
        <text>uridine(55) in tRNA = pseudouridine(55) in tRNA</text>
        <dbReference type="Rhea" id="RHEA:42532"/>
        <dbReference type="Rhea" id="RHEA-COMP:10101"/>
        <dbReference type="Rhea" id="RHEA-COMP:10102"/>
        <dbReference type="ChEBI" id="CHEBI:65314"/>
        <dbReference type="ChEBI" id="CHEBI:65315"/>
        <dbReference type="EC" id="5.4.99.25"/>
    </reaction>
</comment>
<comment type="similarity">
    <text evidence="1">Belongs to the pseudouridine synthase TruB family. Type 2 subfamily.</text>
</comment>
<organism>
    <name type="scientific">Methanosarcina mazei (strain ATCC BAA-159 / DSM 3647 / Goe1 / Go1 / JCM 11833 / OCM 88)</name>
    <name type="common">Methanosarcina frisia</name>
    <dbReference type="NCBI Taxonomy" id="192952"/>
    <lineage>
        <taxon>Archaea</taxon>
        <taxon>Methanobacteriati</taxon>
        <taxon>Methanobacteriota</taxon>
        <taxon>Stenosarchaea group</taxon>
        <taxon>Methanomicrobia</taxon>
        <taxon>Methanosarcinales</taxon>
        <taxon>Methanosarcinaceae</taxon>
        <taxon>Methanosarcina</taxon>
    </lineage>
</organism>